<gene>
    <name type="ordered locus">At1g23210</name>
    <name type="ORF">F26F24.6</name>
    <name type="ORF">T26J12.2</name>
</gene>
<reference key="1">
    <citation type="journal article" date="2000" name="Nature">
        <title>Sequence and analysis of chromosome 1 of the plant Arabidopsis thaliana.</title>
        <authorList>
            <person name="Theologis A."/>
            <person name="Ecker J.R."/>
            <person name="Palm C.J."/>
            <person name="Federspiel N.A."/>
            <person name="Kaul S."/>
            <person name="White O."/>
            <person name="Alonso J."/>
            <person name="Altafi H."/>
            <person name="Araujo R."/>
            <person name="Bowman C.L."/>
            <person name="Brooks S.Y."/>
            <person name="Buehler E."/>
            <person name="Chan A."/>
            <person name="Chao Q."/>
            <person name="Chen H."/>
            <person name="Cheuk R.F."/>
            <person name="Chin C.W."/>
            <person name="Chung M.K."/>
            <person name="Conn L."/>
            <person name="Conway A.B."/>
            <person name="Conway A.R."/>
            <person name="Creasy T.H."/>
            <person name="Dewar K."/>
            <person name="Dunn P."/>
            <person name="Etgu P."/>
            <person name="Feldblyum T.V."/>
            <person name="Feng J.-D."/>
            <person name="Fong B."/>
            <person name="Fujii C.Y."/>
            <person name="Gill J.E."/>
            <person name="Goldsmith A.D."/>
            <person name="Haas B."/>
            <person name="Hansen N.F."/>
            <person name="Hughes B."/>
            <person name="Huizar L."/>
            <person name="Hunter J.L."/>
            <person name="Jenkins J."/>
            <person name="Johnson-Hopson C."/>
            <person name="Khan S."/>
            <person name="Khaykin E."/>
            <person name="Kim C.J."/>
            <person name="Koo H.L."/>
            <person name="Kremenetskaia I."/>
            <person name="Kurtz D.B."/>
            <person name="Kwan A."/>
            <person name="Lam B."/>
            <person name="Langin-Hooper S."/>
            <person name="Lee A."/>
            <person name="Lee J.M."/>
            <person name="Lenz C.A."/>
            <person name="Li J.H."/>
            <person name="Li Y.-P."/>
            <person name="Lin X."/>
            <person name="Liu S.X."/>
            <person name="Liu Z.A."/>
            <person name="Luros J.S."/>
            <person name="Maiti R."/>
            <person name="Marziali A."/>
            <person name="Militscher J."/>
            <person name="Miranda M."/>
            <person name="Nguyen M."/>
            <person name="Nierman W.C."/>
            <person name="Osborne B.I."/>
            <person name="Pai G."/>
            <person name="Peterson J."/>
            <person name="Pham P.K."/>
            <person name="Rizzo M."/>
            <person name="Rooney T."/>
            <person name="Rowley D."/>
            <person name="Sakano H."/>
            <person name="Salzberg S.L."/>
            <person name="Schwartz J.R."/>
            <person name="Shinn P."/>
            <person name="Southwick A.M."/>
            <person name="Sun H."/>
            <person name="Tallon L.J."/>
            <person name="Tambunga G."/>
            <person name="Toriumi M.J."/>
            <person name="Town C.D."/>
            <person name="Utterback T."/>
            <person name="Van Aken S."/>
            <person name="Vaysberg M."/>
            <person name="Vysotskaia V.S."/>
            <person name="Walker M."/>
            <person name="Wu D."/>
            <person name="Yu G."/>
            <person name="Fraser C.M."/>
            <person name="Venter J.C."/>
            <person name="Davis R.W."/>
        </authorList>
    </citation>
    <scope>NUCLEOTIDE SEQUENCE [LARGE SCALE GENOMIC DNA]</scope>
    <source>
        <strain>cv. Columbia</strain>
    </source>
</reference>
<reference key="2">
    <citation type="journal article" date="2017" name="Plant J.">
        <title>Araport11: a complete reannotation of the Arabidopsis thaliana reference genome.</title>
        <authorList>
            <person name="Cheng C.Y."/>
            <person name="Krishnakumar V."/>
            <person name="Chan A.P."/>
            <person name="Thibaud-Nissen F."/>
            <person name="Schobel S."/>
            <person name="Town C.D."/>
        </authorList>
    </citation>
    <scope>GENOME REANNOTATION</scope>
    <source>
        <strain>cv. Columbia</strain>
    </source>
</reference>
<reference key="3">
    <citation type="submission" date="2005-05" db="EMBL/GenBank/DDBJ databases">
        <authorList>
            <person name="Underwood B.A."/>
            <person name="Xiao Y.-L."/>
            <person name="Moskal W.A. Jr."/>
            <person name="Monaghan E.L."/>
            <person name="Wang W."/>
            <person name="Redman J.C."/>
            <person name="Wu H.C."/>
            <person name="Utterback T."/>
            <person name="Town C.D."/>
        </authorList>
    </citation>
    <scope>NUCLEOTIDE SEQUENCE [LARGE SCALE MRNA]</scope>
    <source>
        <strain>cv. Columbia</strain>
    </source>
</reference>
<reference key="4">
    <citation type="submission" date="2006-07" db="EMBL/GenBank/DDBJ databases">
        <title>Arabidopsis ORF clones.</title>
        <authorList>
            <person name="Quinitio C."/>
            <person name="Chen H."/>
            <person name="Kim C.J."/>
            <person name="Shinn P."/>
            <person name="Ecker J.R."/>
        </authorList>
    </citation>
    <scope>NUCLEOTIDE SEQUENCE [LARGE SCALE MRNA]</scope>
    <source>
        <strain>cv. Columbia</strain>
    </source>
</reference>
<reference key="5">
    <citation type="journal article" date="2004" name="J. Mol. Evol.">
        <title>Phylogenetic analysis of the plant endo-beta-1,4-glucanase gene family.</title>
        <authorList>
            <person name="Libertini E."/>
            <person name="Li Y."/>
            <person name="McQueen-Mason S.J."/>
        </authorList>
    </citation>
    <scope>GENE FAMILY</scope>
</reference>
<feature type="signal peptide" evidence="2">
    <location>
        <begin position="1"/>
        <end position="25"/>
    </location>
</feature>
<feature type="chain" id="PRO_0000249257" description="Endoglucanase 4">
    <location>
        <begin position="26"/>
        <end position="489"/>
    </location>
</feature>
<feature type="active site" description="Nucleophile" evidence="5">
    <location>
        <position position="81"/>
    </location>
</feature>
<feature type="active site" evidence="3">
    <location>
        <position position="409"/>
    </location>
</feature>
<feature type="active site" evidence="4">
    <location>
        <position position="460"/>
    </location>
</feature>
<feature type="active site" evidence="4">
    <location>
        <position position="469"/>
    </location>
</feature>
<feature type="glycosylation site" description="N-linked (GlcNAc...) asparagine" evidence="2">
    <location>
        <position position="453"/>
    </location>
</feature>
<protein>
    <recommendedName>
        <fullName>Endoglucanase 4</fullName>
        <ecNumber>3.2.1.4</ecNumber>
    </recommendedName>
    <alternativeName>
        <fullName>Endo-1,4-beta glucanase 4</fullName>
    </alternativeName>
</protein>
<sequence>MAGKSFMTPAIMLAMLLLISPETYAGHDYRDALRKSILFFEGQRSGKLPPDQRLKWRRDSALRDGSSAGVDLTGGYYDAGDNVKFGFPMAFTTTMMSWSVIDFGKTMGPELENAVKAIKWGTDYLMKATQIPDVVFVQVGDAYSDHNCWERPEDMDTLRTVYKIDKDHSGSEVAGETAAALAAASIVFEKRDPVYSKMLLDRATRVFAFAQKYRGAYSDSLYQAVCPFYCDFNGYEDELLWGAAWLHKASKKRVYREFIVKNQVILRAGDTIHEFGWDNKHAGINVLVSKMVLMGKAEYFQSFKQNADEFICSLLPGISHPQVQYSQGGLLVKSGGSNMQHVTSLSFLLLTYSNYLSHANKVVPCGEFTASPALLRQVAKRQVDYILGDNPMKMSYMVGYGSRFPQKIHHRGSSVPSVVDHPDRIGCKDGSRYFFSNNPNPNLLIGAVVGGPNITDDFPDSRPYFQLTEPTTYINAPLLGLLGYFSAHY</sequence>
<organism>
    <name type="scientific">Arabidopsis thaliana</name>
    <name type="common">Mouse-ear cress</name>
    <dbReference type="NCBI Taxonomy" id="3702"/>
    <lineage>
        <taxon>Eukaryota</taxon>
        <taxon>Viridiplantae</taxon>
        <taxon>Streptophyta</taxon>
        <taxon>Embryophyta</taxon>
        <taxon>Tracheophyta</taxon>
        <taxon>Spermatophyta</taxon>
        <taxon>Magnoliopsida</taxon>
        <taxon>eudicotyledons</taxon>
        <taxon>Gunneridae</taxon>
        <taxon>Pentapetalae</taxon>
        <taxon>rosids</taxon>
        <taxon>malvids</taxon>
        <taxon>Brassicales</taxon>
        <taxon>Brassicaceae</taxon>
        <taxon>Camelineae</taxon>
        <taxon>Arabidopsis</taxon>
    </lineage>
</organism>
<evidence type="ECO:0000250" key="1"/>
<evidence type="ECO:0000255" key="2"/>
<evidence type="ECO:0000255" key="3">
    <source>
        <dbReference type="PROSITE-ProRule" id="PRU10059"/>
    </source>
</evidence>
<evidence type="ECO:0000255" key="4">
    <source>
        <dbReference type="PROSITE-ProRule" id="PRU10060"/>
    </source>
</evidence>
<evidence type="ECO:0000255" key="5">
    <source>
        <dbReference type="PROSITE-ProRule" id="PRU10140"/>
    </source>
</evidence>
<evidence type="ECO:0000305" key="6"/>
<keyword id="KW-0119">Carbohydrate metabolism</keyword>
<keyword id="KW-0961">Cell wall biogenesis/degradation</keyword>
<keyword id="KW-0136">Cellulose degradation</keyword>
<keyword id="KW-0325">Glycoprotein</keyword>
<keyword id="KW-0326">Glycosidase</keyword>
<keyword id="KW-0378">Hydrolase</keyword>
<keyword id="KW-0624">Polysaccharide degradation</keyword>
<keyword id="KW-1185">Reference proteome</keyword>
<keyword id="KW-0964">Secreted</keyword>
<keyword id="KW-0732">Signal</keyword>
<accession>O49296</accession>
<name>GUN4_ARATH</name>
<comment type="catalytic activity">
    <reaction>
        <text>Endohydrolysis of (1-&gt;4)-beta-D-glucosidic linkages in cellulose, lichenin and cereal beta-D-glucans.</text>
        <dbReference type="EC" id="3.2.1.4"/>
    </reaction>
</comment>
<comment type="subcellular location">
    <subcellularLocation>
        <location evidence="1">Secreted</location>
    </subcellularLocation>
</comment>
<comment type="similarity">
    <text evidence="5 6">Belongs to the glycosyl hydrolase 9 (cellulase E) family.</text>
</comment>
<proteinExistence type="evidence at transcript level"/>
<dbReference type="EC" id="3.2.1.4"/>
<dbReference type="EMBL" id="AC002311">
    <property type="protein sequence ID" value="AAC00616.1"/>
    <property type="molecule type" value="Genomic_DNA"/>
</dbReference>
<dbReference type="EMBL" id="AC005292">
    <property type="protein sequence ID" value="AAF86995.1"/>
    <property type="molecule type" value="Genomic_DNA"/>
</dbReference>
<dbReference type="EMBL" id="CP002684">
    <property type="protein sequence ID" value="AEE30357.1"/>
    <property type="molecule type" value="Genomic_DNA"/>
</dbReference>
<dbReference type="EMBL" id="DQ056459">
    <property type="protein sequence ID" value="AAY78616.1"/>
    <property type="molecule type" value="mRNA"/>
</dbReference>
<dbReference type="EMBL" id="BT026379">
    <property type="protein sequence ID" value="ABH04486.1"/>
    <property type="molecule type" value="mRNA"/>
</dbReference>
<dbReference type="PIR" id="E86366">
    <property type="entry name" value="E86366"/>
</dbReference>
<dbReference type="RefSeq" id="NP_173735.1">
    <property type="nucleotide sequence ID" value="NM_102170.2"/>
</dbReference>
<dbReference type="SMR" id="O49296"/>
<dbReference type="FunCoup" id="O49296">
    <property type="interactions" value="170"/>
</dbReference>
<dbReference type="STRING" id="3702.O49296"/>
<dbReference type="CAZy" id="GH9">
    <property type="family name" value="Glycoside Hydrolase Family 9"/>
</dbReference>
<dbReference type="GlyGen" id="O49296">
    <property type="glycosylation" value="1 site"/>
</dbReference>
<dbReference type="PaxDb" id="3702-AT1G23210.1"/>
<dbReference type="ProteomicsDB" id="247244"/>
<dbReference type="EnsemblPlants" id="AT1G23210.1">
    <property type="protein sequence ID" value="AT1G23210.1"/>
    <property type="gene ID" value="AT1G23210"/>
</dbReference>
<dbReference type="GeneID" id="838930"/>
<dbReference type="Gramene" id="AT1G23210.1">
    <property type="protein sequence ID" value="AT1G23210.1"/>
    <property type="gene ID" value="AT1G23210"/>
</dbReference>
<dbReference type="KEGG" id="ath:AT1G23210"/>
<dbReference type="Araport" id="AT1G23210"/>
<dbReference type="TAIR" id="AT1G23210">
    <property type="gene designation" value="GH9B6"/>
</dbReference>
<dbReference type="eggNOG" id="ENOG502QR9R">
    <property type="taxonomic scope" value="Eukaryota"/>
</dbReference>
<dbReference type="HOGENOM" id="CLU_008926_1_2_1"/>
<dbReference type="InParanoid" id="O49296"/>
<dbReference type="OMA" id="CDFNGYE"/>
<dbReference type="PhylomeDB" id="O49296"/>
<dbReference type="BioCyc" id="ARA:AT1G23210-MONOMER"/>
<dbReference type="PRO" id="PR:O49296"/>
<dbReference type="Proteomes" id="UP000006548">
    <property type="component" value="Chromosome 1"/>
</dbReference>
<dbReference type="ExpressionAtlas" id="O49296">
    <property type="expression patterns" value="baseline and differential"/>
</dbReference>
<dbReference type="GO" id="GO:0005576">
    <property type="term" value="C:extracellular region"/>
    <property type="evidence" value="ECO:0007669"/>
    <property type="project" value="UniProtKB-SubCell"/>
</dbReference>
<dbReference type="GO" id="GO:0008810">
    <property type="term" value="F:cellulase activity"/>
    <property type="evidence" value="ECO:0007669"/>
    <property type="project" value="UniProtKB-EC"/>
</dbReference>
<dbReference type="GO" id="GO:0071555">
    <property type="term" value="P:cell wall organization"/>
    <property type="evidence" value="ECO:0007669"/>
    <property type="project" value="UniProtKB-KW"/>
</dbReference>
<dbReference type="GO" id="GO:0030245">
    <property type="term" value="P:cellulose catabolic process"/>
    <property type="evidence" value="ECO:0007669"/>
    <property type="project" value="UniProtKB-KW"/>
</dbReference>
<dbReference type="FunFam" id="1.50.10.10:FF:000020">
    <property type="entry name" value="Endoglucanase"/>
    <property type="match status" value="1"/>
</dbReference>
<dbReference type="Gene3D" id="1.50.10.10">
    <property type="match status" value="1"/>
</dbReference>
<dbReference type="InterPro" id="IPR008928">
    <property type="entry name" value="6-hairpin_glycosidase_sf"/>
</dbReference>
<dbReference type="InterPro" id="IPR012341">
    <property type="entry name" value="6hp_glycosidase-like_sf"/>
</dbReference>
<dbReference type="InterPro" id="IPR001701">
    <property type="entry name" value="Glyco_hydro_9"/>
</dbReference>
<dbReference type="InterPro" id="IPR033126">
    <property type="entry name" value="Glyco_hydro_9_Asp/Glu_AS"/>
</dbReference>
<dbReference type="InterPro" id="IPR018221">
    <property type="entry name" value="Glyco_hydro_9_His_AS"/>
</dbReference>
<dbReference type="PANTHER" id="PTHR22298">
    <property type="entry name" value="ENDO-1,4-BETA-GLUCANASE"/>
    <property type="match status" value="1"/>
</dbReference>
<dbReference type="Pfam" id="PF00759">
    <property type="entry name" value="Glyco_hydro_9"/>
    <property type="match status" value="1"/>
</dbReference>
<dbReference type="SUPFAM" id="SSF48208">
    <property type="entry name" value="Six-hairpin glycosidases"/>
    <property type="match status" value="1"/>
</dbReference>
<dbReference type="PROSITE" id="PS60032">
    <property type="entry name" value="GH9_1"/>
    <property type="match status" value="1"/>
</dbReference>
<dbReference type="PROSITE" id="PS00592">
    <property type="entry name" value="GH9_2"/>
    <property type="match status" value="1"/>
</dbReference>
<dbReference type="PROSITE" id="PS00698">
    <property type="entry name" value="GH9_3"/>
    <property type="match status" value="1"/>
</dbReference>